<reference key="1">
    <citation type="journal article" date="1997" name="Nature">
        <title>Genomic sequence of a Lyme disease spirochaete, Borrelia burgdorferi.</title>
        <authorList>
            <person name="Fraser C.M."/>
            <person name="Casjens S."/>
            <person name="Huang W.M."/>
            <person name="Sutton G.G."/>
            <person name="Clayton R.A."/>
            <person name="Lathigra R."/>
            <person name="White O."/>
            <person name="Ketchum K.A."/>
            <person name="Dodson R.J."/>
            <person name="Hickey E.K."/>
            <person name="Gwinn M.L."/>
            <person name="Dougherty B.A."/>
            <person name="Tomb J.-F."/>
            <person name="Fleischmann R.D."/>
            <person name="Richardson D.L."/>
            <person name="Peterson J.D."/>
            <person name="Kerlavage A.R."/>
            <person name="Quackenbush J."/>
            <person name="Salzberg S.L."/>
            <person name="Hanson M."/>
            <person name="van Vugt R."/>
            <person name="Palmer N."/>
            <person name="Adams M.D."/>
            <person name="Gocayne J.D."/>
            <person name="Weidman J.F."/>
            <person name="Utterback T.R."/>
            <person name="Watthey L."/>
            <person name="McDonald L.A."/>
            <person name="Artiach P."/>
            <person name="Bowman C."/>
            <person name="Garland S.A."/>
            <person name="Fujii C."/>
            <person name="Cotton M.D."/>
            <person name="Horst K."/>
            <person name="Roberts K.M."/>
            <person name="Hatch B."/>
            <person name="Smith H.O."/>
            <person name="Venter J.C."/>
        </authorList>
    </citation>
    <scope>NUCLEOTIDE SEQUENCE [LARGE SCALE GENOMIC DNA]</scope>
    <source>
        <strain>ATCC 35210 / DSM 4680 / CIP 102532 / B31</strain>
    </source>
</reference>
<protein>
    <recommendedName>
        <fullName evidence="1">Ribonuclease Z</fullName>
        <shortName evidence="1">RNase Z</shortName>
        <ecNumber evidence="1">3.1.26.11</ecNumber>
    </recommendedName>
    <alternativeName>
        <fullName evidence="1">tRNA 3 endonuclease</fullName>
    </alternativeName>
    <alternativeName>
        <fullName evidence="1">tRNase Z</fullName>
    </alternativeName>
</protein>
<dbReference type="EC" id="3.1.26.11" evidence="1"/>
<dbReference type="EMBL" id="AE000783">
    <property type="protein sequence ID" value="AAC67098.1"/>
    <property type="molecule type" value="Genomic_DNA"/>
</dbReference>
<dbReference type="PIR" id="B70194">
    <property type="entry name" value="B70194"/>
</dbReference>
<dbReference type="RefSeq" id="NP_212889.1">
    <property type="nucleotide sequence ID" value="NC_001318.1"/>
</dbReference>
<dbReference type="RefSeq" id="WP_002657513.1">
    <property type="nucleotide sequence ID" value="NC_001318.1"/>
</dbReference>
<dbReference type="SMR" id="O51696"/>
<dbReference type="STRING" id="224326.BB_0755"/>
<dbReference type="PaxDb" id="224326-BB_0755"/>
<dbReference type="EnsemblBacteria" id="AAC67098">
    <property type="protein sequence ID" value="AAC67098"/>
    <property type="gene ID" value="BB_0755"/>
</dbReference>
<dbReference type="KEGG" id="bbu:BB_0755"/>
<dbReference type="PATRIC" id="fig|224326.49.peg.1145"/>
<dbReference type="HOGENOM" id="CLU_031317_2_1_12"/>
<dbReference type="OrthoDB" id="9800940at2"/>
<dbReference type="Proteomes" id="UP000001807">
    <property type="component" value="Chromosome"/>
</dbReference>
<dbReference type="GO" id="GO:0042781">
    <property type="term" value="F:3'-tRNA processing endoribonuclease activity"/>
    <property type="evidence" value="ECO:0007669"/>
    <property type="project" value="UniProtKB-UniRule"/>
</dbReference>
<dbReference type="GO" id="GO:0008270">
    <property type="term" value="F:zinc ion binding"/>
    <property type="evidence" value="ECO:0007669"/>
    <property type="project" value="UniProtKB-UniRule"/>
</dbReference>
<dbReference type="CDD" id="cd07717">
    <property type="entry name" value="RNaseZ_ZiPD-like_MBL-fold"/>
    <property type="match status" value="1"/>
</dbReference>
<dbReference type="Gene3D" id="3.60.15.10">
    <property type="entry name" value="Ribonuclease Z/Hydroxyacylglutathione hydrolase-like"/>
    <property type="match status" value="1"/>
</dbReference>
<dbReference type="HAMAP" id="MF_01818">
    <property type="entry name" value="RNase_Z_BN"/>
    <property type="match status" value="1"/>
</dbReference>
<dbReference type="InterPro" id="IPR001279">
    <property type="entry name" value="Metallo-B-lactamas"/>
</dbReference>
<dbReference type="InterPro" id="IPR036866">
    <property type="entry name" value="RibonucZ/Hydroxyglut_hydro"/>
</dbReference>
<dbReference type="InterPro" id="IPR013471">
    <property type="entry name" value="RNase_Z/BN"/>
</dbReference>
<dbReference type="NCBIfam" id="NF000801">
    <property type="entry name" value="PRK00055.1-3"/>
    <property type="match status" value="1"/>
</dbReference>
<dbReference type="NCBIfam" id="TIGR02651">
    <property type="entry name" value="RNase_Z"/>
    <property type="match status" value="1"/>
</dbReference>
<dbReference type="PANTHER" id="PTHR46018">
    <property type="entry name" value="ZINC PHOSPHODIESTERASE ELAC PROTEIN 1"/>
    <property type="match status" value="1"/>
</dbReference>
<dbReference type="PANTHER" id="PTHR46018:SF2">
    <property type="entry name" value="ZINC PHOSPHODIESTERASE ELAC PROTEIN 1"/>
    <property type="match status" value="1"/>
</dbReference>
<dbReference type="Pfam" id="PF00753">
    <property type="entry name" value="Lactamase_B"/>
    <property type="match status" value="1"/>
</dbReference>
<dbReference type="Pfam" id="PF12706">
    <property type="entry name" value="Lactamase_B_2"/>
    <property type="match status" value="1"/>
</dbReference>
<dbReference type="SMART" id="SM00849">
    <property type="entry name" value="Lactamase_B"/>
    <property type="match status" value="1"/>
</dbReference>
<dbReference type="SUPFAM" id="SSF56281">
    <property type="entry name" value="Metallo-hydrolase/oxidoreductase"/>
    <property type="match status" value="1"/>
</dbReference>
<evidence type="ECO:0000255" key="1">
    <source>
        <dbReference type="HAMAP-Rule" id="MF_01818"/>
    </source>
</evidence>
<comment type="function">
    <text evidence="1">Zinc phosphodiesterase, which displays some tRNA 3'-processing endonuclease activity. Probably involved in tRNA maturation, by removing a 3'-trailer from precursor tRNA.</text>
</comment>
<comment type="catalytic activity">
    <reaction evidence="1">
        <text>Endonucleolytic cleavage of RNA, removing extra 3' nucleotides from tRNA precursor, generating 3' termini of tRNAs. A 3'-hydroxy group is left at the tRNA terminus and a 5'-phosphoryl group is left at the trailer molecule.</text>
        <dbReference type="EC" id="3.1.26.11"/>
    </reaction>
</comment>
<comment type="cofactor">
    <cofactor evidence="1">
        <name>Zn(2+)</name>
        <dbReference type="ChEBI" id="CHEBI:29105"/>
    </cofactor>
    <text evidence="1">Binds 2 Zn(2+) ions.</text>
</comment>
<comment type="subunit">
    <text evidence="1">Homodimer.</text>
</comment>
<comment type="similarity">
    <text evidence="1">Belongs to the RNase Z family.</text>
</comment>
<name>RNZ_BORBU</name>
<keyword id="KW-0255">Endonuclease</keyword>
<keyword id="KW-0378">Hydrolase</keyword>
<keyword id="KW-0479">Metal-binding</keyword>
<keyword id="KW-0540">Nuclease</keyword>
<keyword id="KW-1185">Reference proteome</keyword>
<keyword id="KW-0819">tRNA processing</keyword>
<keyword id="KW-0862">Zinc</keyword>
<gene>
    <name evidence="1" type="primary">rnz</name>
    <name type="ordered locus">BB_0755</name>
</gene>
<organism>
    <name type="scientific">Borreliella burgdorferi (strain ATCC 35210 / DSM 4680 / CIP 102532 / B31)</name>
    <name type="common">Borrelia burgdorferi</name>
    <dbReference type="NCBI Taxonomy" id="224326"/>
    <lineage>
        <taxon>Bacteria</taxon>
        <taxon>Pseudomonadati</taxon>
        <taxon>Spirochaetota</taxon>
        <taxon>Spirochaetia</taxon>
        <taxon>Spirochaetales</taxon>
        <taxon>Borreliaceae</taxon>
        <taxon>Borreliella</taxon>
    </lineage>
</organism>
<proteinExistence type="inferred from homology"/>
<feature type="chain" id="PRO_0000155851" description="Ribonuclease Z">
    <location>
        <begin position="1"/>
        <end position="319"/>
    </location>
</feature>
<feature type="active site" description="Proton acceptor" evidence="1">
    <location>
        <position position="66"/>
    </location>
</feature>
<feature type="binding site" evidence="1">
    <location>
        <position position="62"/>
    </location>
    <ligand>
        <name>Zn(2+)</name>
        <dbReference type="ChEBI" id="CHEBI:29105"/>
        <label>1</label>
        <note>catalytic</note>
    </ligand>
</feature>
<feature type="binding site" evidence="1">
    <location>
        <position position="64"/>
    </location>
    <ligand>
        <name>Zn(2+)</name>
        <dbReference type="ChEBI" id="CHEBI:29105"/>
        <label>1</label>
        <note>catalytic</note>
    </ligand>
</feature>
<feature type="binding site" evidence="1">
    <location>
        <position position="66"/>
    </location>
    <ligand>
        <name>Zn(2+)</name>
        <dbReference type="ChEBI" id="CHEBI:29105"/>
        <label>2</label>
        <note>catalytic</note>
    </ligand>
</feature>
<feature type="binding site" evidence="1">
    <location>
        <position position="67"/>
    </location>
    <ligand>
        <name>Zn(2+)</name>
        <dbReference type="ChEBI" id="CHEBI:29105"/>
        <label>2</label>
        <note>catalytic</note>
    </ligand>
</feature>
<feature type="binding site" evidence="1">
    <location>
        <position position="145"/>
    </location>
    <ligand>
        <name>Zn(2+)</name>
        <dbReference type="ChEBI" id="CHEBI:29105"/>
        <label>1</label>
        <note>catalytic</note>
    </ligand>
</feature>
<feature type="binding site" evidence="1">
    <location>
        <position position="215"/>
    </location>
    <ligand>
        <name>Zn(2+)</name>
        <dbReference type="ChEBI" id="CHEBI:29105"/>
        <label>1</label>
        <note>catalytic</note>
    </ligand>
</feature>
<feature type="binding site" evidence="1">
    <location>
        <position position="215"/>
    </location>
    <ligand>
        <name>Zn(2+)</name>
        <dbReference type="ChEBI" id="CHEBI:29105"/>
        <label>2</label>
        <note>catalytic</note>
    </ligand>
</feature>
<feature type="binding site" evidence="1">
    <location>
        <position position="273"/>
    </location>
    <ligand>
        <name>Zn(2+)</name>
        <dbReference type="ChEBI" id="CHEBI:29105"/>
        <label>2</label>
        <note>catalytic</note>
    </ligand>
</feature>
<accession>O51696</accession>
<sequence length="319" mass="36384">MGFNINIIGTGGTRPLHNRYLSSVLIEYDGDNFLFDCGEGTQMSLRKQKISWQKIKMICITHLHADHITGLLGIVMLMSQSGETRKEPLIIAGPVGIKNYTQANINMLKIYKNYEIIYKEIIIDKTEKIIYEDKTKKIEYTKLKHSIECVGYLFIEKDKPGKFNTEKAEELNIPKGPIRKALQDGKEILVNGKIIKPSEILGKSKKGLKVAYITDTGYFKELIQQIKNFNLVIIESTFKNELKKEADKKLHLTAGGAANIVKQAKVLQTGLIHFSERYTLRKDLENLLKEAKLEHPDGEIFLTRDGMRLEANKNNFIIK</sequence>